<feature type="chain" id="PRO_1000070003" description="Tyrosine recombinase XerC">
    <location>
        <begin position="1"/>
        <end position="298"/>
    </location>
</feature>
<feature type="domain" description="Core-binding (CB)" evidence="3">
    <location>
        <begin position="2"/>
        <end position="88"/>
    </location>
</feature>
<feature type="domain" description="Tyr recombinase" evidence="2">
    <location>
        <begin position="109"/>
        <end position="288"/>
    </location>
</feature>
<feature type="active site" evidence="1">
    <location>
        <position position="148"/>
    </location>
</feature>
<feature type="active site" evidence="1">
    <location>
        <position position="172"/>
    </location>
</feature>
<feature type="active site" evidence="1">
    <location>
        <position position="240"/>
    </location>
</feature>
<feature type="active site" evidence="1">
    <location>
        <position position="243"/>
    </location>
</feature>
<feature type="active site" evidence="1">
    <location>
        <position position="266"/>
    </location>
</feature>
<feature type="active site" description="O-(3'-phospho-DNA)-tyrosine intermediate" evidence="1">
    <location>
        <position position="275"/>
    </location>
</feature>
<comment type="function">
    <text evidence="1">Site-specific tyrosine recombinase, which acts by catalyzing the cutting and rejoining of the recombining DNA molecules. Binds cooperatively to specific DNA consensus sequences that are separated from XerD binding sites by a short central region, forming the heterotetrameric XerC-XerD complex that recombines DNA substrates. The complex is essential to convert dimers of the bacterial chromosome into monomers to permit their segregation at cell division. It also contributes to the segregational stability of plasmids. In the complex XerC specifically exchanges the top DNA strands.</text>
</comment>
<comment type="activity regulation">
    <text evidence="1">FtsK may regulate the catalytic switch between XerC and XerD in the heterotetrameric complex during the two steps of the recombination process.</text>
</comment>
<comment type="subunit">
    <text evidence="1">Forms a cyclic heterotetrameric complex composed of two molecules of XerC and two molecules of XerD, in which XerC interacts with XerD via its C-terminal region, XerD interacts with XerC via its C-terminal region and so on.</text>
</comment>
<comment type="subcellular location">
    <subcellularLocation>
        <location evidence="1">Cytoplasm</location>
    </subcellularLocation>
</comment>
<comment type="similarity">
    <text evidence="1">Belongs to the 'phage' integrase family. XerC subfamily.</text>
</comment>
<evidence type="ECO:0000255" key="1">
    <source>
        <dbReference type="HAMAP-Rule" id="MF_01808"/>
    </source>
</evidence>
<evidence type="ECO:0000255" key="2">
    <source>
        <dbReference type="PROSITE-ProRule" id="PRU01246"/>
    </source>
</evidence>
<evidence type="ECO:0000255" key="3">
    <source>
        <dbReference type="PROSITE-ProRule" id="PRU01248"/>
    </source>
</evidence>
<organism>
    <name type="scientific">Escherichia coli (strain UTI89 / UPEC)</name>
    <dbReference type="NCBI Taxonomy" id="364106"/>
    <lineage>
        <taxon>Bacteria</taxon>
        <taxon>Pseudomonadati</taxon>
        <taxon>Pseudomonadota</taxon>
        <taxon>Gammaproteobacteria</taxon>
        <taxon>Enterobacterales</taxon>
        <taxon>Enterobacteriaceae</taxon>
        <taxon>Escherichia</taxon>
    </lineage>
</organism>
<proteinExistence type="inferred from homology"/>
<sequence>MTDLHTDVERYLRYLSVERQLSPITLLNYQRQLEAIIHFASENGLQSWQQCDVTMVRNFAVRSRRKGLGAASLALRLSALRSFFDWLVSQNELKANPAKGVSAPKAPRHLPKNIDVDDMNRLLDIDINDPLAVRDRAMLEVMYGAGLRLSELVGLDIKHLDLESGEVWVMGKGSKERRLPIGRNAVAWIEHWLDLRDLFGSEDDALFLSKLGKRISARNVQKRFAEWGIKQGLNNHVHPHKLRHSFATHMLESSGDLRGVQELLGHANLSTTQIYTHLDFQHLASVYDAAHPRAKRGK</sequence>
<accession>Q1R4C3</accession>
<name>XERC_ECOUT</name>
<protein>
    <recommendedName>
        <fullName evidence="1">Tyrosine recombinase XerC</fullName>
    </recommendedName>
</protein>
<reference key="1">
    <citation type="journal article" date="2006" name="Proc. Natl. Acad. Sci. U.S.A.">
        <title>Identification of genes subject to positive selection in uropathogenic strains of Escherichia coli: a comparative genomics approach.</title>
        <authorList>
            <person name="Chen S.L."/>
            <person name="Hung C.-S."/>
            <person name="Xu J."/>
            <person name="Reigstad C.S."/>
            <person name="Magrini V."/>
            <person name="Sabo A."/>
            <person name="Blasiar D."/>
            <person name="Bieri T."/>
            <person name="Meyer R.R."/>
            <person name="Ozersky P."/>
            <person name="Armstrong J.R."/>
            <person name="Fulton R.S."/>
            <person name="Latreille J.P."/>
            <person name="Spieth J."/>
            <person name="Hooton T.M."/>
            <person name="Mardis E.R."/>
            <person name="Hultgren S.J."/>
            <person name="Gordon J.I."/>
        </authorList>
    </citation>
    <scope>NUCLEOTIDE SEQUENCE [LARGE SCALE GENOMIC DNA]</scope>
    <source>
        <strain>UTI89 / UPEC</strain>
    </source>
</reference>
<dbReference type="EMBL" id="CP000243">
    <property type="protein sequence ID" value="ABE09791.1"/>
    <property type="molecule type" value="Genomic_DNA"/>
</dbReference>
<dbReference type="RefSeq" id="WP_000130676.1">
    <property type="nucleotide sequence ID" value="NZ_CP064825.1"/>
</dbReference>
<dbReference type="SMR" id="Q1R4C3"/>
<dbReference type="KEGG" id="eci:UTI89_C4374"/>
<dbReference type="HOGENOM" id="CLU_027562_9_0_6"/>
<dbReference type="Proteomes" id="UP000001952">
    <property type="component" value="Chromosome"/>
</dbReference>
<dbReference type="GO" id="GO:0005737">
    <property type="term" value="C:cytoplasm"/>
    <property type="evidence" value="ECO:0007669"/>
    <property type="project" value="UniProtKB-SubCell"/>
</dbReference>
<dbReference type="GO" id="GO:0003677">
    <property type="term" value="F:DNA binding"/>
    <property type="evidence" value="ECO:0007669"/>
    <property type="project" value="UniProtKB-KW"/>
</dbReference>
<dbReference type="GO" id="GO:0009037">
    <property type="term" value="F:tyrosine-based site-specific recombinase activity"/>
    <property type="evidence" value="ECO:0007669"/>
    <property type="project" value="UniProtKB-UniRule"/>
</dbReference>
<dbReference type="GO" id="GO:0051301">
    <property type="term" value="P:cell division"/>
    <property type="evidence" value="ECO:0007669"/>
    <property type="project" value="UniProtKB-KW"/>
</dbReference>
<dbReference type="GO" id="GO:0007059">
    <property type="term" value="P:chromosome segregation"/>
    <property type="evidence" value="ECO:0007669"/>
    <property type="project" value="UniProtKB-UniRule"/>
</dbReference>
<dbReference type="GO" id="GO:0006313">
    <property type="term" value="P:DNA transposition"/>
    <property type="evidence" value="ECO:0007669"/>
    <property type="project" value="UniProtKB-UniRule"/>
</dbReference>
<dbReference type="CDD" id="cd00798">
    <property type="entry name" value="INT_XerDC_C"/>
    <property type="match status" value="1"/>
</dbReference>
<dbReference type="FunFam" id="1.10.443.10:FF:000002">
    <property type="entry name" value="Tyrosine recombinase XerC"/>
    <property type="match status" value="1"/>
</dbReference>
<dbReference type="Gene3D" id="1.10.150.130">
    <property type="match status" value="1"/>
</dbReference>
<dbReference type="Gene3D" id="1.10.443.10">
    <property type="entry name" value="Intergrase catalytic core"/>
    <property type="match status" value="1"/>
</dbReference>
<dbReference type="HAMAP" id="MF_01808">
    <property type="entry name" value="Recomb_XerC_XerD"/>
    <property type="match status" value="1"/>
</dbReference>
<dbReference type="InterPro" id="IPR044068">
    <property type="entry name" value="CB"/>
</dbReference>
<dbReference type="InterPro" id="IPR011010">
    <property type="entry name" value="DNA_brk_join_enz"/>
</dbReference>
<dbReference type="InterPro" id="IPR013762">
    <property type="entry name" value="Integrase-like_cat_sf"/>
</dbReference>
<dbReference type="InterPro" id="IPR002104">
    <property type="entry name" value="Integrase_catalytic"/>
</dbReference>
<dbReference type="InterPro" id="IPR010998">
    <property type="entry name" value="Integrase_recombinase_N"/>
</dbReference>
<dbReference type="InterPro" id="IPR004107">
    <property type="entry name" value="Integrase_SAM-like_N"/>
</dbReference>
<dbReference type="InterPro" id="IPR011931">
    <property type="entry name" value="Recomb_XerC"/>
</dbReference>
<dbReference type="InterPro" id="IPR023009">
    <property type="entry name" value="Tyrosine_recombinase_XerC/XerD"/>
</dbReference>
<dbReference type="InterPro" id="IPR050090">
    <property type="entry name" value="Tyrosine_recombinase_XerCD"/>
</dbReference>
<dbReference type="NCBIfam" id="NF001399">
    <property type="entry name" value="PRK00283.1"/>
    <property type="match status" value="1"/>
</dbReference>
<dbReference type="NCBIfam" id="TIGR02224">
    <property type="entry name" value="recomb_XerC"/>
    <property type="match status" value="1"/>
</dbReference>
<dbReference type="PANTHER" id="PTHR30349">
    <property type="entry name" value="PHAGE INTEGRASE-RELATED"/>
    <property type="match status" value="1"/>
</dbReference>
<dbReference type="PANTHER" id="PTHR30349:SF81">
    <property type="entry name" value="TYROSINE RECOMBINASE XERC"/>
    <property type="match status" value="1"/>
</dbReference>
<dbReference type="Pfam" id="PF02899">
    <property type="entry name" value="Phage_int_SAM_1"/>
    <property type="match status" value="1"/>
</dbReference>
<dbReference type="Pfam" id="PF00589">
    <property type="entry name" value="Phage_integrase"/>
    <property type="match status" value="1"/>
</dbReference>
<dbReference type="SUPFAM" id="SSF56349">
    <property type="entry name" value="DNA breaking-rejoining enzymes"/>
    <property type="match status" value="1"/>
</dbReference>
<dbReference type="SUPFAM" id="SSF47823">
    <property type="entry name" value="lambda integrase-like, N-terminal domain"/>
    <property type="match status" value="1"/>
</dbReference>
<dbReference type="PROSITE" id="PS51900">
    <property type="entry name" value="CB"/>
    <property type="match status" value="1"/>
</dbReference>
<dbReference type="PROSITE" id="PS51898">
    <property type="entry name" value="TYR_RECOMBINASE"/>
    <property type="match status" value="1"/>
</dbReference>
<keyword id="KW-0131">Cell cycle</keyword>
<keyword id="KW-0132">Cell division</keyword>
<keyword id="KW-0159">Chromosome partition</keyword>
<keyword id="KW-0963">Cytoplasm</keyword>
<keyword id="KW-0229">DNA integration</keyword>
<keyword id="KW-0233">DNA recombination</keyword>
<keyword id="KW-0238">DNA-binding</keyword>
<gene>
    <name evidence="1" type="primary">xerC</name>
    <name type="ordered locus">UTI89_C4374</name>
</gene>